<organism>
    <name type="scientific">Bacillus subtilis (strain 168)</name>
    <dbReference type="NCBI Taxonomy" id="224308"/>
    <lineage>
        <taxon>Bacteria</taxon>
        <taxon>Bacillati</taxon>
        <taxon>Bacillota</taxon>
        <taxon>Bacilli</taxon>
        <taxon>Bacillales</taxon>
        <taxon>Bacillaceae</taxon>
        <taxon>Bacillus</taxon>
    </lineage>
</organism>
<sequence length="454" mass="50651">MKLKTKIHLYTSISLLILLILVHTAVYLIFSSALTSKDAARLADETDNIAEALRAAETEGVALQDMLQAYLPANGMVRVVNGDQKAVMTITKEKAYKDFPLSFHSGETADVRKPDGKLFAEAAVPVIWTDGQVVSLQLVERLENTEESLFLLKIILIAASAAVCIASFFAGSLLARRIINPIRRLMITMKDIQRDKEFKTISLEGQSNDELYQMGLTFNEMAMMLKEHYDKQQQFVQDASHELKTPLTIIESYSSLMKRWGAKKPEVLEESIEAIHSEAVHMKKLTNQLLALAKSHQGLEVDLKTIDLIKAARAVMQTLQSVYQRDILLETDKESLLVKADEERIKQLLTILLDNAIKYSEKPIEMSAGTRNGRPFLSVRDEGIGIPEEHIPHLFERFYRADEARNRKTGGTGLGLSIAKQIADEHGIELSVKSKPGQGTAVTMQFSEQNGGGR</sequence>
<keyword id="KW-0067">ATP-binding</keyword>
<keyword id="KW-1003">Cell membrane</keyword>
<keyword id="KW-0418">Kinase</keyword>
<keyword id="KW-0472">Membrane</keyword>
<keyword id="KW-0547">Nucleotide-binding</keyword>
<keyword id="KW-0597">Phosphoprotein</keyword>
<keyword id="KW-1185">Reference proteome</keyword>
<keyword id="KW-0808">Transferase</keyword>
<keyword id="KW-0812">Transmembrane</keyword>
<keyword id="KW-1133">Transmembrane helix</keyword>
<keyword id="KW-0902">Two-component regulatory system</keyword>
<gene>
    <name type="primary">ykoH</name>
    <name type="ordered locus">BSU13260</name>
</gene>
<name>YKOH_BACSU</name>
<protein>
    <recommendedName>
        <fullName>Sensor histidine kinase YkoH</fullName>
        <ecNumber>2.7.13.3</ecNumber>
    </recommendedName>
</protein>
<proteinExistence type="inferred from homology"/>
<evidence type="ECO:0000255" key="1"/>
<evidence type="ECO:0000255" key="2">
    <source>
        <dbReference type="PROSITE-ProRule" id="PRU00102"/>
    </source>
</evidence>
<evidence type="ECO:0000255" key="3">
    <source>
        <dbReference type="PROSITE-ProRule" id="PRU00107"/>
    </source>
</evidence>
<evidence type="ECO:0000269" key="4">
    <source>
    </source>
</evidence>
<evidence type="ECO:0000305" key="5"/>
<dbReference type="EC" id="2.7.13.3"/>
<dbReference type="EMBL" id="AJ002571">
    <property type="protein sequence ID" value="CAA05605.1"/>
    <property type="molecule type" value="Genomic_DNA"/>
</dbReference>
<dbReference type="EMBL" id="AL009126">
    <property type="protein sequence ID" value="CAB13183.1"/>
    <property type="molecule type" value="Genomic_DNA"/>
</dbReference>
<dbReference type="PIR" id="D69859">
    <property type="entry name" value="D69859"/>
</dbReference>
<dbReference type="RefSeq" id="NP_389209.1">
    <property type="nucleotide sequence ID" value="NC_000964.3"/>
</dbReference>
<dbReference type="RefSeq" id="WP_003245526.1">
    <property type="nucleotide sequence ID" value="NZ_OZ025638.1"/>
</dbReference>
<dbReference type="SMR" id="O34638"/>
<dbReference type="FunCoup" id="O34638">
    <property type="interactions" value="261"/>
</dbReference>
<dbReference type="STRING" id="224308.BSU13260"/>
<dbReference type="jPOST" id="O34638"/>
<dbReference type="PaxDb" id="224308-BSU13260"/>
<dbReference type="EnsemblBacteria" id="CAB13183">
    <property type="protein sequence ID" value="CAB13183"/>
    <property type="gene ID" value="BSU_13260"/>
</dbReference>
<dbReference type="GeneID" id="936458"/>
<dbReference type="KEGG" id="bsu:BSU13260"/>
<dbReference type="PATRIC" id="fig|224308.179.peg.1440"/>
<dbReference type="eggNOG" id="COG3850">
    <property type="taxonomic scope" value="Bacteria"/>
</dbReference>
<dbReference type="eggNOG" id="COG5002">
    <property type="taxonomic scope" value="Bacteria"/>
</dbReference>
<dbReference type="InParanoid" id="O34638"/>
<dbReference type="OrthoDB" id="9786919at2"/>
<dbReference type="PhylomeDB" id="O34638"/>
<dbReference type="BioCyc" id="BSUB:BSU13260-MONOMER"/>
<dbReference type="Proteomes" id="UP000001570">
    <property type="component" value="Chromosome"/>
</dbReference>
<dbReference type="GO" id="GO:0005886">
    <property type="term" value="C:plasma membrane"/>
    <property type="evidence" value="ECO:0000318"/>
    <property type="project" value="GO_Central"/>
</dbReference>
<dbReference type="GO" id="GO:0005524">
    <property type="term" value="F:ATP binding"/>
    <property type="evidence" value="ECO:0007669"/>
    <property type="project" value="UniProtKB-KW"/>
</dbReference>
<dbReference type="GO" id="GO:0000155">
    <property type="term" value="F:phosphorelay sensor kinase activity"/>
    <property type="evidence" value="ECO:0007669"/>
    <property type="project" value="InterPro"/>
</dbReference>
<dbReference type="GO" id="GO:0000160">
    <property type="term" value="P:phosphorelay signal transduction system"/>
    <property type="evidence" value="ECO:0000318"/>
    <property type="project" value="GO_Central"/>
</dbReference>
<dbReference type="CDD" id="cd06225">
    <property type="entry name" value="HAMP"/>
    <property type="match status" value="1"/>
</dbReference>
<dbReference type="CDD" id="cd00075">
    <property type="entry name" value="HATPase"/>
    <property type="match status" value="1"/>
</dbReference>
<dbReference type="CDD" id="cd00082">
    <property type="entry name" value="HisKA"/>
    <property type="match status" value="1"/>
</dbReference>
<dbReference type="FunFam" id="3.30.565.10:FF:000006">
    <property type="entry name" value="Sensor histidine kinase WalK"/>
    <property type="match status" value="1"/>
</dbReference>
<dbReference type="FunFam" id="1.10.287.130:FF:000001">
    <property type="entry name" value="Two-component sensor histidine kinase"/>
    <property type="match status" value="1"/>
</dbReference>
<dbReference type="Gene3D" id="1.10.287.130">
    <property type="match status" value="1"/>
</dbReference>
<dbReference type="Gene3D" id="6.10.340.10">
    <property type="match status" value="1"/>
</dbReference>
<dbReference type="Gene3D" id="3.30.565.10">
    <property type="entry name" value="Histidine kinase-like ATPase, C-terminal domain"/>
    <property type="match status" value="1"/>
</dbReference>
<dbReference type="InterPro" id="IPR003660">
    <property type="entry name" value="HAMP_dom"/>
</dbReference>
<dbReference type="InterPro" id="IPR036890">
    <property type="entry name" value="HATPase_C_sf"/>
</dbReference>
<dbReference type="InterPro" id="IPR005467">
    <property type="entry name" value="His_kinase_dom"/>
</dbReference>
<dbReference type="InterPro" id="IPR003661">
    <property type="entry name" value="HisK_dim/P_dom"/>
</dbReference>
<dbReference type="InterPro" id="IPR036097">
    <property type="entry name" value="HisK_dim/P_sf"/>
</dbReference>
<dbReference type="InterPro" id="IPR004358">
    <property type="entry name" value="Sig_transdc_His_kin-like_C"/>
</dbReference>
<dbReference type="InterPro" id="IPR050428">
    <property type="entry name" value="TCS_sensor_his_kinase"/>
</dbReference>
<dbReference type="PANTHER" id="PTHR45436:SF5">
    <property type="entry name" value="SENSOR HISTIDINE KINASE TRCS"/>
    <property type="match status" value="1"/>
</dbReference>
<dbReference type="PANTHER" id="PTHR45436">
    <property type="entry name" value="SENSOR HISTIDINE KINASE YKOH"/>
    <property type="match status" value="1"/>
</dbReference>
<dbReference type="Pfam" id="PF00672">
    <property type="entry name" value="HAMP"/>
    <property type="match status" value="1"/>
</dbReference>
<dbReference type="Pfam" id="PF02518">
    <property type="entry name" value="HATPase_c"/>
    <property type="match status" value="1"/>
</dbReference>
<dbReference type="Pfam" id="PF00512">
    <property type="entry name" value="HisKA"/>
    <property type="match status" value="1"/>
</dbReference>
<dbReference type="PRINTS" id="PR00344">
    <property type="entry name" value="BCTRLSENSOR"/>
</dbReference>
<dbReference type="SMART" id="SM00304">
    <property type="entry name" value="HAMP"/>
    <property type="match status" value="1"/>
</dbReference>
<dbReference type="SMART" id="SM00387">
    <property type="entry name" value="HATPase_c"/>
    <property type="match status" value="1"/>
</dbReference>
<dbReference type="SMART" id="SM00388">
    <property type="entry name" value="HisKA"/>
    <property type="match status" value="1"/>
</dbReference>
<dbReference type="SUPFAM" id="SSF55874">
    <property type="entry name" value="ATPase domain of HSP90 chaperone/DNA topoisomerase II/histidine kinase"/>
    <property type="match status" value="1"/>
</dbReference>
<dbReference type="SUPFAM" id="SSF47384">
    <property type="entry name" value="Homodimeric domain of signal transducing histidine kinase"/>
    <property type="match status" value="1"/>
</dbReference>
<dbReference type="PROSITE" id="PS50885">
    <property type="entry name" value="HAMP"/>
    <property type="match status" value="1"/>
</dbReference>
<dbReference type="PROSITE" id="PS50109">
    <property type="entry name" value="HIS_KIN"/>
    <property type="match status" value="1"/>
</dbReference>
<feature type="chain" id="PRO_0000074922" description="Sensor histidine kinase YkoH">
    <location>
        <begin position="1"/>
        <end position="454"/>
    </location>
</feature>
<feature type="topological domain" description="Cytoplasmic" evidence="1">
    <location>
        <begin position="1"/>
        <end position="12"/>
    </location>
</feature>
<feature type="transmembrane region" description="Helical" evidence="1">
    <location>
        <begin position="13"/>
        <end position="33"/>
    </location>
</feature>
<feature type="topological domain" description="Extracellular" evidence="1">
    <location>
        <begin position="34"/>
        <end position="153"/>
    </location>
</feature>
<feature type="transmembrane region" description="Helical" evidence="1">
    <location>
        <begin position="154"/>
        <end position="174"/>
    </location>
</feature>
<feature type="topological domain" description="Cytoplasmic" evidence="1">
    <location>
        <begin position="175"/>
        <end position="454"/>
    </location>
</feature>
<feature type="domain" description="HAMP" evidence="2">
    <location>
        <begin position="176"/>
        <end position="230"/>
    </location>
</feature>
<feature type="domain" description="Histidine kinase" evidence="3">
    <location>
        <begin position="238"/>
        <end position="450"/>
    </location>
</feature>
<feature type="modified residue" description="Phosphohistidine; by autocatalysis" evidence="3">
    <location>
        <position position="241"/>
    </location>
</feature>
<reference key="1">
    <citation type="submission" date="1997-11" db="EMBL/GenBank/DDBJ databases">
        <title>Sequence of the Bacillus subtilis genome between xlyA and ykoR.</title>
        <authorList>
            <person name="Devine K.M."/>
        </authorList>
    </citation>
    <scope>NUCLEOTIDE SEQUENCE [GENOMIC DNA]</scope>
    <source>
        <strain>168</strain>
    </source>
</reference>
<reference key="2">
    <citation type="journal article" date="1997" name="Nature">
        <title>The complete genome sequence of the Gram-positive bacterium Bacillus subtilis.</title>
        <authorList>
            <person name="Kunst F."/>
            <person name="Ogasawara N."/>
            <person name="Moszer I."/>
            <person name="Albertini A.M."/>
            <person name="Alloni G."/>
            <person name="Azevedo V."/>
            <person name="Bertero M.G."/>
            <person name="Bessieres P."/>
            <person name="Bolotin A."/>
            <person name="Borchert S."/>
            <person name="Borriss R."/>
            <person name="Boursier L."/>
            <person name="Brans A."/>
            <person name="Braun M."/>
            <person name="Brignell S.C."/>
            <person name="Bron S."/>
            <person name="Brouillet S."/>
            <person name="Bruschi C.V."/>
            <person name="Caldwell B."/>
            <person name="Capuano V."/>
            <person name="Carter N.M."/>
            <person name="Choi S.-K."/>
            <person name="Codani J.-J."/>
            <person name="Connerton I.F."/>
            <person name="Cummings N.J."/>
            <person name="Daniel R.A."/>
            <person name="Denizot F."/>
            <person name="Devine K.M."/>
            <person name="Duesterhoeft A."/>
            <person name="Ehrlich S.D."/>
            <person name="Emmerson P.T."/>
            <person name="Entian K.-D."/>
            <person name="Errington J."/>
            <person name="Fabret C."/>
            <person name="Ferrari E."/>
            <person name="Foulger D."/>
            <person name="Fritz C."/>
            <person name="Fujita M."/>
            <person name="Fujita Y."/>
            <person name="Fuma S."/>
            <person name="Galizzi A."/>
            <person name="Galleron N."/>
            <person name="Ghim S.-Y."/>
            <person name="Glaser P."/>
            <person name="Goffeau A."/>
            <person name="Golightly E.J."/>
            <person name="Grandi G."/>
            <person name="Guiseppi G."/>
            <person name="Guy B.J."/>
            <person name="Haga K."/>
            <person name="Haiech J."/>
            <person name="Harwood C.R."/>
            <person name="Henaut A."/>
            <person name="Hilbert H."/>
            <person name="Holsappel S."/>
            <person name="Hosono S."/>
            <person name="Hullo M.-F."/>
            <person name="Itaya M."/>
            <person name="Jones L.-M."/>
            <person name="Joris B."/>
            <person name="Karamata D."/>
            <person name="Kasahara Y."/>
            <person name="Klaerr-Blanchard M."/>
            <person name="Klein C."/>
            <person name="Kobayashi Y."/>
            <person name="Koetter P."/>
            <person name="Koningstein G."/>
            <person name="Krogh S."/>
            <person name="Kumano M."/>
            <person name="Kurita K."/>
            <person name="Lapidus A."/>
            <person name="Lardinois S."/>
            <person name="Lauber J."/>
            <person name="Lazarevic V."/>
            <person name="Lee S.-M."/>
            <person name="Levine A."/>
            <person name="Liu H."/>
            <person name="Masuda S."/>
            <person name="Mauel C."/>
            <person name="Medigue C."/>
            <person name="Medina N."/>
            <person name="Mellado R.P."/>
            <person name="Mizuno M."/>
            <person name="Moestl D."/>
            <person name="Nakai S."/>
            <person name="Noback M."/>
            <person name="Noone D."/>
            <person name="O'Reilly M."/>
            <person name="Ogawa K."/>
            <person name="Ogiwara A."/>
            <person name="Oudega B."/>
            <person name="Park S.-H."/>
            <person name="Parro V."/>
            <person name="Pohl T.M."/>
            <person name="Portetelle D."/>
            <person name="Porwollik S."/>
            <person name="Prescott A.M."/>
            <person name="Presecan E."/>
            <person name="Pujic P."/>
            <person name="Purnelle B."/>
            <person name="Rapoport G."/>
            <person name="Rey M."/>
            <person name="Reynolds S."/>
            <person name="Rieger M."/>
            <person name="Rivolta C."/>
            <person name="Rocha E."/>
            <person name="Roche B."/>
            <person name="Rose M."/>
            <person name="Sadaie Y."/>
            <person name="Sato T."/>
            <person name="Scanlan E."/>
            <person name="Schleich S."/>
            <person name="Schroeter R."/>
            <person name="Scoffone F."/>
            <person name="Sekiguchi J."/>
            <person name="Sekowska A."/>
            <person name="Seror S.J."/>
            <person name="Serror P."/>
            <person name="Shin B.-S."/>
            <person name="Soldo B."/>
            <person name="Sorokin A."/>
            <person name="Tacconi E."/>
            <person name="Takagi T."/>
            <person name="Takahashi H."/>
            <person name="Takemaru K."/>
            <person name="Takeuchi M."/>
            <person name="Tamakoshi A."/>
            <person name="Tanaka T."/>
            <person name="Terpstra P."/>
            <person name="Tognoni A."/>
            <person name="Tosato V."/>
            <person name="Uchiyama S."/>
            <person name="Vandenbol M."/>
            <person name="Vannier F."/>
            <person name="Vassarotti A."/>
            <person name="Viari A."/>
            <person name="Wambutt R."/>
            <person name="Wedler E."/>
            <person name="Wedler H."/>
            <person name="Weitzenegger T."/>
            <person name="Winters P."/>
            <person name="Wipat A."/>
            <person name="Yamamoto H."/>
            <person name="Yamane K."/>
            <person name="Yasumoto K."/>
            <person name="Yata K."/>
            <person name="Yoshida K."/>
            <person name="Yoshikawa H.-F."/>
            <person name="Zumstein E."/>
            <person name="Yoshikawa H."/>
            <person name="Danchin A."/>
        </authorList>
    </citation>
    <scope>NUCLEOTIDE SEQUENCE [LARGE SCALE GENOMIC DNA]</scope>
    <source>
        <strain>168</strain>
    </source>
</reference>
<reference key="3">
    <citation type="journal article" date="2001" name="J. Bacteriol.">
        <title>Comprehensive DNA microarray analysis of Bacillus subtilis two-component regulatory systems.</title>
        <authorList>
            <person name="Kobayashi K."/>
            <person name="Ogura M."/>
            <person name="Yamaguchi H."/>
            <person name="Yoshida K."/>
            <person name="Ogasawara N."/>
            <person name="Tanaka T."/>
            <person name="Fujita Y."/>
        </authorList>
    </citation>
    <scope>FUNCTION</scope>
</reference>
<comment type="function">
    <text evidence="4">Probable member of the two-component regulatory system YkoH/YkoG. Potentially phosphorylates YkoG.</text>
</comment>
<comment type="catalytic activity">
    <reaction>
        <text>ATP + protein L-histidine = ADP + protein N-phospho-L-histidine.</text>
        <dbReference type="EC" id="2.7.13.3"/>
    </reaction>
</comment>
<comment type="subcellular location">
    <subcellularLocation>
        <location evidence="5">Cell membrane</location>
        <topology evidence="5">Multi-pass membrane protein</topology>
    </subcellularLocation>
</comment>
<accession>O34638</accession>